<evidence type="ECO:0000255" key="1">
    <source>
        <dbReference type="HAMAP-Rule" id="MF_01839"/>
    </source>
</evidence>
<comment type="function">
    <text evidence="1">Required for nucleoid occlusion (NO) phenomenon, which prevents Z-ring formation and cell division over the nucleoid. Acts as a DNA-associated cell division inhibitor that binds simultaneously chromosomal DNA and FtsZ, and disrupts the assembly of FtsZ polymers. SlmA-DNA-binding sequences (SBS) are dispersed on non-Ter regions of the chromosome, preventing FtsZ polymerization at these regions.</text>
</comment>
<comment type="subunit">
    <text evidence="1">Homodimer. Interacts with FtsZ.</text>
</comment>
<comment type="subcellular location">
    <subcellularLocation>
        <location evidence="1">Cytoplasm</location>
        <location evidence="1">Nucleoid</location>
    </subcellularLocation>
</comment>
<comment type="similarity">
    <text evidence="1">Belongs to the nucleoid occlusion factor SlmA family.</text>
</comment>
<feature type="chain" id="PRO_1000070536" description="Nucleoid occlusion factor SlmA">
    <location>
        <begin position="1"/>
        <end position="198"/>
    </location>
</feature>
<feature type="domain" description="HTH tetR-type" evidence="1">
    <location>
        <begin position="9"/>
        <end position="70"/>
    </location>
</feature>
<feature type="DNA-binding region" description="H-T-H motif" evidence="1">
    <location>
        <begin position="33"/>
        <end position="52"/>
    </location>
</feature>
<feature type="coiled-coil region" evidence="1">
    <location>
        <begin position="119"/>
        <end position="144"/>
    </location>
</feature>
<keyword id="KW-0131">Cell cycle</keyword>
<keyword id="KW-0132">Cell division</keyword>
<keyword id="KW-0175">Coiled coil</keyword>
<keyword id="KW-0963">Cytoplasm</keyword>
<keyword id="KW-0238">DNA-binding</keyword>
<dbReference type="EMBL" id="AP008232">
    <property type="protein sequence ID" value="BAE75486.1"/>
    <property type="molecule type" value="Genomic_DNA"/>
</dbReference>
<dbReference type="RefSeq" id="WP_011412022.1">
    <property type="nucleotide sequence ID" value="NC_007712.1"/>
</dbReference>
<dbReference type="SMR" id="Q2NQT9"/>
<dbReference type="STRING" id="343509.SG2211"/>
<dbReference type="KEGG" id="sgl:SG2211"/>
<dbReference type="eggNOG" id="COG1309">
    <property type="taxonomic scope" value="Bacteria"/>
</dbReference>
<dbReference type="HOGENOM" id="CLU_069356_5_0_6"/>
<dbReference type="OrthoDB" id="9179041at2"/>
<dbReference type="Proteomes" id="UP000001932">
    <property type="component" value="Chromosome"/>
</dbReference>
<dbReference type="GO" id="GO:0043590">
    <property type="term" value="C:bacterial nucleoid"/>
    <property type="evidence" value="ECO:0007669"/>
    <property type="project" value="UniProtKB-UniRule"/>
</dbReference>
<dbReference type="GO" id="GO:0005737">
    <property type="term" value="C:cytoplasm"/>
    <property type="evidence" value="ECO:0007669"/>
    <property type="project" value="UniProtKB-UniRule"/>
</dbReference>
<dbReference type="GO" id="GO:0003700">
    <property type="term" value="F:DNA-binding transcription factor activity"/>
    <property type="evidence" value="ECO:0007669"/>
    <property type="project" value="TreeGrafter"/>
</dbReference>
<dbReference type="GO" id="GO:0000976">
    <property type="term" value="F:transcription cis-regulatory region binding"/>
    <property type="evidence" value="ECO:0007669"/>
    <property type="project" value="TreeGrafter"/>
</dbReference>
<dbReference type="GO" id="GO:0051301">
    <property type="term" value="P:cell division"/>
    <property type="evidence" value="ECO:0007669"/>
    <property type="project" value="UniProtKB-KW"/>
</dbReference>
<dbReference type="GO" id="GO:0010974">
    <property type="term" value="P:negative regulation of division septum assembly"/>
    <property type="evidence" value="ECO:0007669"/>
    <property type="project" value="InterPro"/>
</dbReference>
<dbReference type="FunFam" id="1.10.357.10:FF:000002">
    <property type="entry name" value="Nucleoid occlusion factor SlmA"/>
    <property type="match status" value="1"/>
</dbReference>
<dbReference type="Gene3D" id="1.10.357.10">
    <property type="entry name" value="Tetracycline Repressor, domain 2"/>
    <property type="match status" value="1"/>
</dbReference>
<dbReference type="HAMAP" id="MF_01839">
    <property type="entry name" value="NO_factor_SlmA"/>
    <property type="match status" value="1"/>
</dbReference>
<dbReference type="InterPro" id="IPR023772">
    <property type="entry name" value="DNA-bd_HTH_TetR-type_CS"/>
</dbReference>
<dbReference type="InterPro" id="IPR009057">
    <property type="entry name" value="Homeodomain-like_sf"/>
</dbReference>
<dbReference type="InterPro" id="IPR050109">
    <property type="entry name" value="HTH-type_TetR-like_transc_reg"/>
</dbReference>
<dbReference type="InterPro" id="IPR001647">
    <property type="entry name" value="HTH_TetR"/>
</dbReference>
<dbReference type="InterPro" id="IPR023769">
    <property type="entry name" value="NO_SlmA"/>
</dbReference>
<dbReference type="InterPro" id="IPR054580">
    <property type="entry name" value="SlmA-like_C"/>
</dbReference>
<dbReference type="InterPro" id="IPR036271">
    <property type="entry name" value="Tet_transcr_reg_TetR-rel_C_sf"/>
</dbReference>
<dbReference type="NCBIfam" id="NF007015">
    <property type="entry name" value="PRK09480.1"/>
    <property type="match status" value="1"/>
</dbReference>
<dbReference type="PANTHER" id="PTHR30055">
    <property type="entry name" value="HTH-TYPE TRANSCRIPTIONAL REGULATOR RUTR"/>
    <property type="match status" value="1"/>
</dbReference>
<dbReference type="PANTHER" id="PTHR30055:SF183">
    <property type="entry name" value="NUCLEOID OCCLUSION FACTOR SLMA"/>
    <property type="match status" value="1"/>
</dbReference>
<dbReference type="Pfam" id="PF22276">
    <property type="entry name" value="SlmA-like_C"/>
    <property type="match status" value="1"/>
</dbReference>
<dbReference type="Pfam" id="PF00440">
    <property type="entry name" value="TetR_N"/>
    <property type="match status" value="1"/>
</dbReference>
<dbReference type="SUPFAM" id="SSF46689">
    <property type="entry name" value="Homeodomain-like"/>
    <property type="match status" value="1"/>
</dbReference>
<dbReference type="SUPFAM" id="SSF48498">
    <property type="entry name" value="Tetracyclin repressor-like, C-terminal domain"/>
    <property type="match status" value="1"/>
</dbReference>
<dbReference type="PROSITE" id="PS01081">
    <property type="entry name" value="HTH_TETR_1"/>
    <property type="match status" value="1"/>
</dbReference>
<dbReference type="PROSITE" id="PS50977">
    <property type="entry name" value="HTH_TETR_2"/>
    <property type="match status" value="1"/>
</dbReference>
<reference key="1">
    <citation type="journal article" date="2006" name="Genome Res.">
        <title>Massive genome erosion and functional adaptations provide insights into the symbiotic lifestyle of Sodalis glossinidius in the tsetse host.</title>
        <authorList>
            <person name="Toh H."/>
            <person name="Weiss B.L."/>
            <person name="Perkin S.A.H."/>
            <person name="Yamashita A."/>
            <person name="Oshima K."/>
            <person name="Hattori M."/>
            <person name="Aksoy S."/>
        </authorList>
    </citation>
    <scope>NUCLEOTIDE SEQUENCE [LARGE SCALE GENOMIC DNA]</scope>
    <source>
        <strain>morsitans</strain>
    </source>
</reference>
<accession>Q2NQT9</accession>
<sequence length="198" mass="23192">MAEKENTKRNRREEILQALAQMLESSDGSQRITTAKLAANVGVSEAALYRHFPSKTRMFDSLIEFIEDSLISRINLILQDEKETLNRLRLILLLLLGFAERNPGLTRIMTGHALMFEQDRLQGRINQLYERIEVQLRQVLRERKLREGEAFELDESLLASQLLAFCEGMLSRFVRTEFKYRPTQEFELRWPLLVAQLH</sequence>
<gene>
    <name evidence="1" type="primary">slmA</name>
    <name type="ordered locus">SG2211</name>
</gene>
<proteinExistence type="inferred from homology"/>
<organism>
    <name type="scientific">Sodalis glossinidius (strain morsitans)</name>
    <dbReference type="NCBI Taxonomy" id="343509"/>
    <lineage>
        <taxon>Bacteria</taxon>
        <taxon>Pseudomonadati</taxon>
        <taxon>Pseudomonadota</taxon>
        <taxon>Gammaproteobacteria</taxon>
        <taxon>Enterobacterales</taxon>
        <taxon>Bruguierivoracaceae</taxon>
        <taxon>Sodalis</taxon>
    </lineage>
</organism>
<protein>
    <recommendedName>
        <fullName evidence="1">Nucleoid occlusion factor SlmA</fullName>
    </recommendedName>
</protein>
<name>SLMA_SODGM</name>